<feature type="chain" id="PRO_0000130493" description="Large ribosomal subunit protein uL29">
    <location>
        <begin position="1"/>
        <end position="63"/>
    </location>
</feature>
<reference key="1">
    <citation type="journal article" date="2003" name="Lancet">
        <title>Genome sequence of Vibrio parahaemolyticus: a pathogenic mechanism distinct from that of V. cholerae.</title>
        <authorList>
            <person name="Makino K."/>
            <person name="Oshima K."/>
            <person name="Kurokawa K."/>
            <person name="Yokoyama K."/>
            <person name="Uda T."/>
            <person name="Tagomori K."/>
            <person name="Iijima Y."/>
            <person name="Najima M."/>
            <person name="Nakano M."/>
            <person name="Yamashita A."/>
            <person name="Kubota Y."/>
            <person name="Kimura S."/>
            <person name="Yasunaga T."/>
            <person name="Honda T."/>
            <person name="Shinagawa H."/>
            <person name="Hattori M."/>
            <person name="Iida T."/>
        </authorList>
    </citation>
    <scope>NUCLEOTIDE SEQUENCE [LARGE SCALE GENOMIC DNA]</scope>
    <source>
        <strain>RIMD 2210633</strain>
    </source>
</reference>
<evidence type="ECO:0000255" key="1">
    <source>
        <dbReference type="HAMAP-Rule" id="MF_00374"/>
    </source>
</evidence>
<evidence type="ECO:0000305" key="2"/>
<accession>Q87T05</accession>
<protein>
    <recommendedName>
        <fullName evidence="1">Large ribosomal subunit protein uL29</fullName>
    </recommendedName>
    <alternativeName>
        <fullName evidence="2">50S ribosomal protein L29</fullName>
    </alternativeName>
</protein>
<keyword id="KW-0687">Ribonucleoprotein</keyword>
<keyword id="KW-0689">Ribosomal protein</keyword>
<proteinExistence type="inferred from homology"/>
<dbReference type="EMBL" id="BA000031">
    <property type="protein sequence ID" value="BAC58528.1"/>
    <property type="molecule type" value="Genomic_DNA"/>
</dbReference>
<dbReference type="RefSeq" id="NP_796644.1">
    <property type="nucleotide sequence ID" value="NC_004603.1"/>
</dbReference>
<dbReference type="RefSeq" id="WP_005379576.1">
    <property type="nucleotide sequence ID" value="NC_004603.1"/>
</dbReference>
<dbReference type="SMR" id="Q87T05"/>
<dbReference type="GeneID" id="75168978"/>
<dbReference type="KEGG" id="vpa:VP0265"/>
<dbReference type="PATRIC" id="fig|223926.6.peg.256"/>
<dbReference type="eggNOG" id="COG0255">
    <property type="taxonomic scope" value="Bacteria"/>
</dbReference>
<dbReference type="HOGENOM" id="CLU_158491_1_2_6"/>
<dbReference type="Proteomes" id="UP000002493">
    <property type="component" value="Chromosome 1"/>
</dbReference>
<dbReference type="GO" id="GO:0022625">
    <property type="term" value="C:cytosolic large ribosomal subunit"/>
    <property type="evidence" value="ECO:0007669"/>
    <property type="project" value="TreeGrafter"/>
</dbReference>
<dbReference type="GO" id="GO:0003735">
    <property type="term" value="F:structural constituent of ribosome"/>
    <property type="evidence" value="ECO:0007669"/>
    <property type="project" value="InterPro"/>
</dbReference>
<dbReference type="GO" id="GO:0006412">
    <property type="term" value="P:translation"/>
    <property type="evidence" value="ECO:0007669"/>
    <property type="project" value="UniProtKB-UniRule"/>
</dbReference>
<dbReference type="CDD" id="cd00427">
    <property type="entry name" value="Ribosomal_L29_HIP"/>
    <property type="match status" value="1"/>
</dbReference>
<dbReference type="FunFam" id="1.10.287.310:FF:000001">
    <property type="entry name" value="50S ribosomal protein L29"/>
    <property type="match status" value="1"/>
</dbReference>
<dbReference type="Gene3D" id="1.10.287.310">
    <property type="match status" value="1"/>
</dbReference>
<dbReference type="HAMAP" id="MF_00374">
    <property type="entry name" value="Ribosomal_uL29"/>
    <property type="match status" value="1"/>
</dbReference>
<dbReference type="InterPro" id="IPR050063">
    <property type="entry name" value="Ribosomal_protein_uL29"/>
</dbReference>
<dbReference type="InterPro" id="IPR001854">
    <property type="entry name" value="Ribosomal_uL29"/>
</dbReference>
<dbReference type="InterPro" id="IPR018254">
    <property type="entry name" value="Ribosomal_uL29_CS"/>
</dbReference>
<dbReference type="InterPro" id="IPR036049">
    <property type="entry name" value="Ribosomal_uL29_sf"/>
</dbReference>
<dbReference type="NCBIfam" id="TIGR00012">
    <property type="entry name" value="L29"/>
    <property type="match status" value="1"/>
</dbReference>
<dbReference type="PANTHER" id="PTHR10916">
    <property type="entry name" value="60S RIBOSOMAL PROTEIN L35/50S RIBOSOMAL PROTEIN L29"/>
    <property type="match status" value="1"/>
</dbReference>
<dbReference type="PANTHER" id="PTHR10916:SF0">
    <property type="entry name" value="LARGE RIBOSOMAL SUBUNIT PROTEIN UL29C"/>
    <property type="match status" value="1"/>
</dbReference>
<dbReference type="Pfam" id="PF00831">
    <property type="entry name" value="Ribosomal_L29"/>
    <property type="match status" value="1"/>
</dbReference>
<dbReference type="SUPFAM" id="SSF46561">
    <property type="entry name" value="Ribosomal protein L29 (L29p)"/>
    <property type="match status" value="1"/>
</dbReference>
<dbReference type="PROSITE" id="PS00579">
    <property type="entry name" value="RIBOSOMAL_L29"/>
    <property type="match status" value="1"/>
</dbReference>
<organism>
    <name type="scientific">Vibrio parahaemolyticus serotype O3:K6 (strain RIMD 2210633)</name>
    <dbReference type="NCBI Taxonomy" id="223926"/>
    <lineage>
        <taxon>Bacteria</taxon>
        <taxon>Pseudomonadati</taxon>
        <taxon>Pseudomonadota</taxon>
        <taxon>Gammaproteobacteria</taxon>
        <taxon>Vibrionales</taxon>
        <taxon>Vibrionaceae</taxon>
        <taxon>Vibrio</taxon>
    </lineage>
</organism>
<name>RL29_VIBPA</name>
<sequence length="63" mass="7193">MKAQDLREKSVEELNAELMNLLREQFNLRMQAATGQLQQTHTLKAVRRDIARVKTVLTEKAGA</sequence>
<comment type="similarity">
    <text evidence="1">Belongs to the universal ribosomal protein uL29 family.</text>
</comment>
<gene>
    <name evidence="1" type="primary">rpmC</name>
    <name type="ordered locus">VP0265</name>
</gene>